<sequence>MAEAATTDVKKLSFERALEELETIVKRLEDGKVPLEESVTIYERGEALKRRCEDLLRQAEARVDKITTDAQGAPTGTEPLDVQ</sequence>
<feature type="chain" id="PRO_0000206994" description="Exodeoxyribonuclease 7 small subunit">
    <location>
        <begin position="1"/>
        <end position="83"/>
    </location>
</feature>
<proteinExistence type="inferred from homology"/>
<dbReference type="EC" id="3.1.11.6" evidence="1"/>
<dbReference type="EMBL" id="BX572596">
    <property type="protein sequence ID" value="CAE26397.1"/>
    <property type="molecule type" value="Genomic_DNA"/>
</dbReference>
<dbReference type="RefSeq" id="WP_011156488.1">
    <property type="nucleotide sequence ID" value="NZ_CP116810.1"/>
</dbReference>
<dbReference type="SMR" id="Q6NB75"/>
<dbReference type="STRING" id="258594.RPA0953"/>
<dbReference type="GeneID" id="66891972"/>
<dbReference type="eggNOG" id="COG1722">
    <property type="taxonomic scope" value="Bacteria"/>
</dbReference>
<dbReference type="HOGENOM" id="CLU_145918_0_3_5"/>
<dbReference type="PhylomeDB" id="Q6NB75"/>
<dbReference type="GO" id="GO:0005829">
    <property type="term" value="C:cytosol"/>
    <property type="evidence" value="ECO:0007669"/>
    <property type="project" value="TreeGrafter"/>
</dbReference>
<dbReference type="GO" id="GO:0009318">
    <property type="term" value="C:exodeoxyribonuclease VII complex"/>
    <property type="evidence" value="ECO:0007669"/>
    <property type="project" value="InterPro"/>
</dbReference>
<dbReference type="GO" id="GO:0008855">
    <property type="term" value="F:exodeoxyribonuclease VII activity"/>
    <property type="evidence" value="ECO:0007669"/>
    <property type="project" value="UniProtKB-UniRule"/>
</dbReference>
<dbReference type="GO" id="GO:0006308">
    <property type="term" value="P:DNA catabolic process"/>
    <property type="evidence" value="ECO:0007669"/>
    <property type="project" value="UniProtKB-UniRule"/>
</dbReference>
<dbReference type="FunFam" id="1.10.287.1040:FF:000004">
    <property type="entry name" value="Exodeoxyribonuclease 7 small subunit"/>
    <property type="match status" value="1"/>
</dbReference>
<dbReference type="Gene3D" id="1.10.287.1040">
    <property type="entry name" value="Exonuclease VII, small subunit"/>
    <property type="match status" value="1"/>
</dbReference>
<dbReference type="HAMAP" id="MF_00337">
    <property type="entry name" value="Exonuc_7_S"/>
    <property type="match status" value="1"/>
</dbReference>
<dbReference type="InterPro" id="IPR003761">
    <property type="entry name" value="Exonuc_VII_S"/>
</dbReference>
<dbReference type="InterPro" id="IPR037004">
    <property type="entry name" value="Exonuc_VII_ssu_sf"/>
</dbReference>
<dbReference type="NCBIfam" id="NF002139">
    <property type="entry name" value="PRK00977.1-3"/>
    <property type="match status" value="1"/>
</dbReference>
<dbReference type="NCBIfam" id="NF002140">
    <property type="entry name" value="PRK00977.1-4"/>
    <property type="match status" value="1"/>
</dbReference>
<dbReference type="NCBIfam" id="TIGR01280">
    <property type="entry name" value="xseB"/>
    <property type="match status" value="1"/>
</dbReference>
<dbReference type="PANTHER" id="PTHR34137">
    <property type="entry name" value="EXODEOXYRIBONUCLEASE 7 SMALL SUBUNIT"/>
    <property type="match status" value="1"/>
</dbReference>
<dbReference type="PANTHER" id="PTHR34137:SF1">
    <property type="entry name" value="EXODEOXYRIBONUCLEASE 7 SMALL SUBUNIT"/>
    <property type="match status" value="1"/>
</dbReference>
<dbReference type="Pfam" id="PF02609">
    <property type="entry name" value="Exonuc_VII_S"/>
    <property type="match status" value="1"/>
</dbReference>
<dbReference type="PIRSF" id="PIRSF006488">
    <property type="entry name" value="Exonuc_VII_S"/>
    <property type="match status" value="1"/>
</dbReference>
<dbReference type="SUPFAM" id="SSF116842">
    <property type="entry name" value="XseB-like"/>
    <property type="match status" value="1"/>
</dbReference>
<name>EX7S_RHOPA</name>
<reference key="1">
    <citation type="journal article" date="2004" name="Nat. Biotechnol.">
        <title>Complete genome sequence of the metabolically versatile photosynthetic bacterium Rhodopseudomonas palustris.</title>
        <authorList>
            <person name="Larimer F.W."/>
            <person name="Chain P."/>
            <person name="Hauser L."/>
            <person name="Lamerdin J.E."/>
            <person name="Malfatti S."/>
            <person name="Do L."/>
            <person name="Land M.L."/>
            <person name="Pelletier D.A."/>
            <person name="Beatty J.T."/>
            <person name="Lang A.S."/>
            <person name="Tabita F.R."/>
            <person name="Gibson J.L."/>
            <person name="Hanson T.E."/>
            <person name="Bobst C."/>
            <person name="Torres y Torres J.L."/>
            <person name="Peres C."/>
            <person name="Harrison F.H."/>
            <person name="Gibson J."/>
            <person name="Harwood C.S."/>
        </authorList>
    </citation>
    <scope>NUCLEOTIDE SEQUENCE [LARGE SCALE GENOMIC DNA]</scope>
    <source>
        <strain>ATCC BAA-98 / CGA009</strain>
    </source>
</reference>
<accession>Q6NB75</accession>
<comment type="function">
    <text evidence="1">Bidirectionally degrades single-stranded DNA into large acid-insoluble oligonucleotides, which are then degraded further into small acid-soluble oligonucleotides.</text>
</comment>
<comment type="catalytic activity">
    <reaction evidence="1">
        <text>Exonucleolytic cleavage in either 5'- to 3'- or 3'- to 5'-direction to yield nucleoside 5'-phosphates.</text>
        <dbReference type="EC" id="3.1.11.6"/>
    </reaction>
</comment>
<comment type="subunit">
    <text evidence="1">Heterooligomer composed of large and small subunits.</text>
</comment>
<comment type="subcellular location">
    <subcellularLocation>
        <location evidence="1">Cytoplasm</location>
    </subcellularLocation>
</comment>
<comment type="similarity">
    <text evidence="1">Belongs to the XseB family.</text>
</comment>
<gene>
    <name evidence="1" type="primary">xseB</name>
    <name type="ordered locus">RPA0953</name>
</gene>
<organism>
    <name type="scientific">Rhodopseudomonas palustris (strain ATCC BAA-98 / CGA009)</name>
    <dbReference type="NCBI Taxonomy" id="258594"/>
    <lineage>
        <taxon>Bacteria</taxon>
        <taxon>Pseudomonadati</taxon>
        <taxon>Pseudomonadota</taxon>
        <taxon>Alphaproteobacteria</taxon>
        <taxon>Hyphomicrobiales</taxon>
        <taxon>Nitrobacteraceae</taxon>
        <taxon>Rhodopseudomonas</taxon>
    </lineage>
</organism>
<protein>
    <recommendedName>
        <fullName evidence="1">Exodeoxyribonuclease 7 small subunit</fullName>
        <ecNumber evidence="1">3.1.11.6</ecNumber>
    </recommendedName>
    <alternativeName>
        <fullName evidence="1">Exodeoxyribonuclease VII small subunit</fullName>
        <shortName evidence="1">Exonuclease VII small subunit</shortName>
    </alternativeName>
</protein>
<evidence type="ECO:0000255" key="1">
    <source>
        <dbReference type="HAMAP-Rule" id="MF_00337"/>
    </source>
</evidence>
<keyword id="KW-0963">Cytoplasm</keyword>
<keyword id="KW-0269">Exonuclease</keyword>
<keyword id="KW-0378">Hydrolase</keyword>
<keyword id="KW-0540">Nuclease</keyword>